<gene>
    <name type="primary">cgr1</name>
    <name type="ORF">SPAC1556.05c</name>
</gene>
<accession>Q9UTJ4</accession>
<comment type="function">
    <text evidence="1">Involved in nucleolar integrity and required for processing of the pre-rRNA for the 60S ribosome subunit.</text>
</comment>
<comment type="subcellular location">
    <subcellularLocation>
        <location evidence="1">Nucleus</location>
        <location evidence="1">Nucleolus</location>
    </subcellularLocation>
</comment>
<comment type="similarity">
    <text evidence="4">Belongs to the CGR1 family.</text>
</comment>
<reference key="1">
    <citation type="journal article" date="2002" name="Nature">
        <title>The genome sequence of Schizosaccharomyces pombe.</title>
        <authorList>
            <person name="Wood V."/>
            <person name="Gwilliam R."/>
            <person name="Rajandream M.A."/>
            <person name="Lyne M.H."/>
            <person name="Lyne R."/>
            <person name="Stewart A."/>
            <person name="Sgouros J.G."/>
            <person name="Peat N."/>
            <person name="Hayles J."/>
            <person name="Baker S.G."/>
            <person name="Basham D."/>
            <person name="Bowman S."/>
            <person name="Brooks K."/>
            <person name="Brown D."/>
            <person name="Brown S."/>
            <person name="Chillingworth T."/>
            <person name="Churcher C.M."/>
            <person name="Collins M."/>
            <person name="Connor R."/>
            <person name="Cronin A."/>
            <person name="Davis P."/>
            <person name="Feltwell T."/>
            <person name="Fraser A."/>
            <person name="Gentles S."/>
            <person name="Goble A."/>
            <person name="Hamlin N."/>
            <person name="Harris D.E."/>
            <person name="Hidalgo J."/>
            <person name="Hodgson G."/>
            <person name="Holroyd S."/>
            <person name="Hornsby T."/>
            <person name="Howarth S."/>
            <person name="Huckle E.J."/>
            <person name="Hunt S."/>
            <person name="Jagels K."/>
            <person name="James K.D."/>
            <person name="Jones L."/>
            <person name="Jones M."/>
            <person name="Leather S."/>
            <person name="McDonald S."/>
            <person name="McLean J."/>
            <person name="Mooney P."/>
            <person name="Moule S."/>
            <person name="Mungall K.L."/>
            <person name="Murphy L.D."/>
            <person name="Niblett D."/>
            <person name="Odell C."/>
            <person name="Oliver K."/>
            <person name="O'Neil S."/>
            <person name="Pearson D."/>
            <person name="Quail M.A."/>
            <person name="Rabbinowitsch E."/>
            <person name="Rutherford K.M."/>
            <person name="Rutter S."/>
            <person name="Saunders D."/>
            <person name="Seeger K."/>
            <person name="Sharp S."/>
            <person name="Skelton J."/>
            <person name="Simmonds M.N."/>
            <person name="Squares R."/>
            <person name="Squares S."/>
            <person name="Stevens K."/>
            <person name="Taylor K."/>
            <person name="Taylor R.G."/>
            <person name="Tivey A."/>
            <person name="Walsh S.V."/>
            <person name="Warren T."/>
            <person name="Whitehead S."/>
            <person name="Woodward J.R."/>
            <person name="Volckaert G."/>
            <person name="Aert R."/>
            <person name="Robben J."/>
            <person name="Grymonprez B."/>
            <person name="Weltjens I."/>
            <person name="Vanstreels E."/>
            <person name="Rieger M."/>
            <person name="Schaefer M."/>
            <person name="Mueller-Auer S."/>
            <person name="Gabel C."/>
            <person name="Fuchs M."/>
            <person name="Duesterhoeft A."/>
            <person name="Fritzc C."/>
            <person name="Holzer E."/>
            <person name="Moestl D."/>
            <person name="Hilbert H."/>
            <person name="Borzym K."/>
            <person name="Langer I."/>
            <person name="Beck A."/>
            <person name="Lehrach H."/>
            <person name="Reinhardt R."/>
            <person name="Pohl T.M."/>
            <person name="Eger P."/>
            <person name="Zimmermann W."/>
            <person name="Wedler H."/>
            <person name="Wambutt R."/>
            <person name="Purnelle B."/>
            <person name="Goffeau A."/>
            <person name="Cadieu E."/>
            <person name="Dreano S."/>
            <person name="Gloux S."/>
            <person name="Lelaure V."/>
            <person name="Mottier S."/>
            <person name="Galibert F."/>
            <person name="Aves S.J."/>
            <person name="Xiang Z."/>
            <person name="Hunt C."/>
            <person name="Moore K."/>
            <person name="Hurst S.M."/>
            <person name="Lucas M."/>
            <person name="Rochet M."/>
            <person name="Gaillardin C."/>
            <person name="Tallada V.A."/>
            <person name="Garzon A."/>
            <person name="Thode G."/>
            <person name="Daga R.R."/>
            <person name="Cruzado L."/>
            <person name="Jimenez J."/>
            <person name="Sanchez M."/>
            <person name="del Rey F."/>
            <person name="Benito J."/>
            <person name="Dominguez A."/>
            <person name="Revuelta J.L."/>
            <person name="Moreno S."/>
            <person name="Armstrong J."/>
            <person name="Forsburg S.L."/>
            <person name="Cerutti L."/>
            <person name="Lowe T."/>
            <person name="McCombie W.R."/>
            <person name="Paulsen I."/>
            <person name="Potashkin J."/>
            <person name="Shpakovski G.V."/>
            <person name="Ussery D."/>
            <person name="Barrell B.G."/>
            <person name="Nurse P."/>
        </authorList>
    </citation>
    <scope>NUCLEOTIDE SEQUENCE [LARGE SCALE GENOMIC DNA]</scope>
    <source>
        <strain>972 / ATCC 24843</strain>
    </source>
</reference>
<organism>
    <name type="scientific">Schizosaccharomyces pombe (strain 972 / ATCC 24843)</name>
    <name type="common">Fission yeast</name>
    <dbReference type="NCBI Taxonomy" id="284812"/>
    <lineage>
        <taxon>Eukaryota</taxon>
        <taxon>Fungi</taxon>
        <taxon>Dikarya</taxon>
        <taxon>Ascomycota</taxon>
        <taxon>Taphrinomycotina</taxon>
        <taxon>Schizosaccharomycetes</taxon>
        <taxon>Schizosaccharomycetales</taxon>
        <taxon>Schizosaccharomycetaceae</taxon>
        <taxon>Schizosaccharomyces</taxon>
    </lineage>
</organism>
<protein>
    <recommendedName>
        <fullName>rRNA-processing protein cgr1</fullName>
    </recommendedName>
</protein>
<dbReference type="EMBL" id="CU329670">
    <property type="protein sequence ID" value="CAB61216.1"/>
    <property type="molecule type" value="Genomic_DNA"/>
</dbReference>
<dbReference type="PIR" id="T50084">
    <property type="entry name" value="T50084"/>
</dbReference>
<dbReference type="RefSeq" id="NP_594322.1">
    <property type="nucleotide sequence ID" value="NM_001019744.2"/>
</dbReference>
<dbReference type="SMR" id="Q9UTJ4"/>
<dbReference type="BioGRID" id="278194">
    <property type="interactions" value="5"/>
</dbReference>
<dbReference type="FunCoup" id="Q9UTJ4">
    <property type="interactions" value="7"/>
</dbReference>
<dbReference type="STRING" id="284812.Q9UTJ4"/>
<dbReference type="PaxDb" id="4896-SPAC1556.05c.1"/>
<dbReference type="EnsemblFungi" id="SPAC1556.05c.1">
    <property type="protein sequence ID" value="SPAC1556.05c.1:pep"/>
    <property type="gene ID" value="SPAC1556.05c"/>
</dbReference>
<dbReference type="GeneID" id="2541698"/>
<dbReference type="KEGG" id="spo:2541698"/>
<dbReference type="PomBase" id="SPAC1556.05c">
    <property type="gene designation" value="cgr1"/>
</dbReference>
<dbReference type="VEuPathDB" id="FungiDB:SPAC1556.05c"/>
<dbReference type="eggNOG" id="ENOG502S7VB">
    <property type="taxonomic scope" value="Eukaryota"/>
</dbReference>
<dbReference type="HOGENOM" id="CLU_125051_0_1_1"/>
<dbReference type="InParanoid" id="Q9UTJ4"/>
<dbReference type="OMA" id="NGKQWHD"/>
<dbReference type="PhylomeDB" id="Q9UTJ4"/>
<dbReference type="PRO" id="PR:Q9UTJ4"/>
<dbReference type="Proteomes" id="UP000002485">
    <property type="component" value="Chromosome I"/>
</dbReference>
<dbReference type="GO" id="GO:0005730">
    <property type="term" value="C:nucleolus"/>
    <property type="evidence" value="ECO:0007005"/>
    <property type="project" value="PomBase"/>
</dbReference>
<dbReference type="GO" id="GO:0005634">
    <property type="term" value="C:nucleus"/>
    <property type="evidence" value="ECO:0007005"/>
    <property type="project" value="PomBase"/>
</dbReference>
<dbReference type="GO" id="GO:0006364">
    <property type="term" value="P:rRNA processing"/>
    <property type="evidence" value="ECO:0000250"/>
    <property type="project" value="PomBase"/>
</dbReference>
<dbReference type="InterPro" id="IPR005579">
    <property type="entry name" value="Cgr1-like"/>
</dbReference>
<dbReference type="Pfam" id="PF03879">
    <property type="entry name" value="Cgr1"/>
    <property type="match status" value="1"/>
</dbReference>
<keyword id="KW-0175">Coiled coil</keyword>
<keyword id="KW-0539">Nucleus</keyword>
<keyword id="KW-1185">Reference proteome</keyword>
<keyword id="KW-0690">Ribosome biogenesis</keyword>
<keyword id="KW-0698">rRNA processing</keyword>
<evidence type="ECO:0000250" key="1"/>
<evidence type="ECO:0000255" key="2"/>
<evidence type="ECO:0000256" key="3">
    <source>
        <dbReference type="SAM" id="MobiDB-lite"/>
    </source>
</evidence>
<evidence type="ECO:0000305" key="4"/>
<feature type="chain" id="PRO_0000278960" description="rRNA-processing protein cgr1">
    <location>
        <begin position="1"/>
        <end position="111"/>
    </location>
</feature>
<feature type="region of interest" description="Disordered" evidence="3">
    <location>
        <begin position="21"/>
        <end position="80"/>
    </location>
</feature>
<feature type="coiled-coil region" evidence="2">
    <location>
        <begin position="35"/>
        <end position="93"/>
    </location>
</feature>
<feature type="compositionally biased region" description="Basic and acidic residues" evidence="3">
    <location>
        <begin position="34"/>
        <end position="80"/>
    </location>
</feature>
<sequence>MVNGTKGVCVSGKPWKTEKKAYNRSGLADAQRTPYEKRMEQKRKLDEIKEREKELKREKEEQRAAHAEKIRTRRQAKADRERMELLQAKLHQKVIDRRRRREKRNKMLKER</sequence>
<proteinExistence type="inferred from homology"/>
<name>CGR1_SCHPO</name>